<proteinExistence type="inferred from homology"/>
<name>TATA_BDEBA</name>
<evidence type="ECO:0000255" key="1">
    <source>
        <dbReference type="HAMAP-Rule" id="MF_00236"/>
    </source>
</evidence>
<evidence type="ECO:0000256" key="2">
    <source>
        <dbReference type="SAM" id="MobiDB-lite"/>
    </source>
</evidence>
<keyword id="KW-0997">Cell inner membrane</keyword>
<keyword id="KW-1003">Cell membrane</keyword>
<keyword id="KW-0472">Membrane</keyword>
<keyword id="KW-0653">Protein transport</keyword>
<keyword id="KW-1185">Reference proteome</keyword>
<keyword id="KW-0811">Translocation</keyword>
<keyword id="KW-0812">Transmembrane</keyword>
<keyword id="KW-1133">Transmembrane helix</keyword>
<keyword id="KW-0813">Transport</keyword>
<sequence>MGEFSLTHILLLAVIFLIFFGPSRLPQLGQSMGKAIRGFKQGLNEIDVDAKDIHDNQQVSHQNKQSMGQTQKQGENQNS</sequence>
<feature type="chain" id="PRO_1000058954" description="Sec-independent protein translocase protein TatA">
    <location>
        <begin position="1"/>
        <end position="79"/>
    </location>
</feature>
<feature type="transmembrane region" description="Helical" evidence="1">
    <location>
        <begin position="1"/>
        <end position="21"/>
    </location>
</feature>
<feature type="region of interest" description="Disordered" evidence="2">
    <location>
        <begin position="52"/>
        <end position="79"/>
    </location>
</feature>
<feature type="compositionally biased region" description="Polar residues" evidence="2">
    <location>
        <begin position="56"/>
        <end position="79"/>
    </location>
</feature>
<gene>
    <name evidence="1" type="primary">tatA</name>
    <name type="ordered locus">Bd2196</name>
</gene>
<reference key="1">
    <citation type="journal article" date="2004" name="Science">
        <title>A predator unmasked: life cycle of Bdellovibrio bacteriovorus from a genomic perspective.</title>
        <authorList>
            <person name="Rendulic S."/>
            <person name="Jagtap P."/>
            <person name="Rosinus A."/>
            <person name="Eppinger M."/>
            <person name="Baar C."/>
            <person name="Lanz C."/>
            <person name="Keller H."/>
            <person name="Lambert C."/>
            <person name="Evans K.J."/>
            <person name="Goesmann A."/>
            <person name="Meyer F."/>
            <person name="Sockett R.E."/>
            <person name="Schuster S.C."/>
        </authorList>
    </citation>
    <scope>NUCLEOTIDE SEQUENCE [LARGE SCALE GENOMIC DNA]</scope>
    <source>
        <strain>ATCC 15356 / DSM 50701 / NCIMB 9529 / HD100</strain>
    </source>
</reference>
<protein>
    <recommendedName>
        <fullName evidence="1">Sec-independent protein translocase protein TatA</fullName>
    </recommendedName>
</protein>
<comment type="function">
    <text evidence="1">Part of the twin-arginine translocation (Tat) system that transports large folded proteins containing a characteristic twin-arginine motif in their signal peptide across membranes. TatA could form the protein-conducting channel of the Tat system.</text>
</comment>
<comment type="subunit">
    <text evidence="1">The Tat system comprises two distinct complexes: a TatABC complex, containing multiple copies of TatA, TatB and TatC subunits, and a separate TatA complex, containing only TatA subunits. Substrates initially bind to the TatABC complex, which probably triggers association of the separate TatA complex to form the active translocon.</text>
</comment>
<comment type="subcellular location">
    <subcellularLocation>
        <location evidence="1">Cell inner membrane</location>
        <topology evidence="1">Single-pass membrane protein</topology>
    </subcellularLocation>
</comment>
<comment type="similarity">
    <text evidence="1">Belongs to the TatA/E family.</text>
</comment>
<accession>Q6ML26</accession>
<dbReference type="EMBL" id="BX842652">
    <property type="protein sequence ID" value="CAE80031.1"/>
    <property type="molecule type" value="Genomic_DNA"/>
</dbReference>
<dbReference type="RefSeq" id="WP_011164633.1">
    <property type="nucleotide sequence ID" value="NC_005363.1"/>
</dbReference>
<dbReference type="SMR" id="Q6ML26"/>
<dbReference type="STRING" id="264462.Bd2196"/>
<dbReference type="TCDB" id="2.A.64.1.3">
    <property type="family name" value="the twin arginine targeting (tat) family"/>
</dbReference>
<dbReference type="GeneID" id="93013133"/>
<dbReference type="KEGG" id="bba:Bd2196"/>
<dbReference type="eggNOG" id="COG1826">
    <property type="taxonomic scope" value="Bacteria"/>
</dbReference>
<dbReference type="HOGENOM" id="CLU_086034_5_2_7"/>
<dbReference type="Proteomes" id="UP000008080">
    <property type="component" value="Chromosome"/>
</dbReference>
<dbReference type="GO" id="GO:0033281">
    <property type="term" value="C:TAT protein transport complex"/>
    <property type="evidence" value="ECO:0007669"/>
    <property type="project" value="UniProtKB-UniRule"/>
</dbReference>
<dbReference type="GO" id="GO:0008320">
    <property type="term" value="F:protein transmembrane transporter activity"/>
    <property type="evidence" value="ECO:0007669"/>
    <property type="project" value="UniProtKB-UniRule"/>
</dbReference>
<dbReference type="GO" id="GO:0043953">
    <property type="term" value="P:protein transport by the Tat complex"/>
    <property type="evidence" value="ECO:0007669"/>
    <property type="project" value="UniProtKB-UniRule"/>
</dbReference>
<dbReference type="Gene3D" id="1.20.5.3310">
    <property type="match status" value="1"/>
</dbReference>
<dbReference type="HAMAP" id="MF_00236">
    <property type="entry name" value="TatA_E"/>
    <property type="match status" value="1"/>
</dbReference>
<dbReference type="InterPro" id="IPR003369">
    <property type="entry name" value="TatA/B/E"/>
</dbReference>
<dbReference type="InterPro" id="IPR006312">
    <property type="entry name" value="TatA/E"/>
</dbReference>
<dbReference type="NCBIfam" id="TIGR01411">
    <property type="entry name" value="tatAE"/>
    <property type="match status" value="1"/>
</dbReference>
<dbReference type="PANTHER" id="PTHR42982">
    <property type="entry name" value="SEC-INDEPENDENT PROTEIN TRANSLOCASE PROTEIN TATA"/>
    <property type="match status" value="1"/>
</dbReference>
<dbReference type="PANTHER" id="PTHR42982:SF1">
    <property type="entry name" value="SEC-INDEPENDENT PROTEIN TRANSLOCASE PROTEIN TATA"/>
    <property type="match status" value="1"/>
</dbReference>
<dbReference type="Pfam" id="PF02416">
    <property type="entry name" value="TatA_B_E"/>
    <property type="match status" value="1"/>
</dbReference>
<organism>
    <name type="scientific">Bdellovibrio bacteriovorus (strain ATCC 15356 / DSM 50701 / NCIMB 9529 / HD100)</name>
    <dbReference type="NCBI Taxonomy" id="264462"/>
    <lineage>
        <taxon>Bacteria</taxon>
        <taxon>Pseudomonadati</taxon>
        <taxon>Bdellovibrionota</taxon>
        <taxon>Bdellovibrionia</taxon>
        <taxon>Bdellovibrionales</taxon>
        <taxon>Pseudobdellovibrionaceae</taxon>
        <taxon>Bdellovibrio</taxon>
    </lineage>
</organism>